<reference key="1">
    <citation type="journal article" date="1998" name="Mamm. Genome">
        <title>Male sex determination in the spiny rat Tokudaia osimensis (Rodentia: Muridae) is not Sry dependent.</title>
        <authorList>
            <person name="Soullier S."/>
            <person name="Hanni C."/>
            <person name="Catzeflis F."/>
            <person name="Berta P."/>
            <person name="Laudet V."/>
        </authorList>
    </citation>
    <scope>NUCLEOTIDE SEQUENCE [GENOMIC DNA]</scope>
</reference>
<keyword id="KW-0010">Activator</keyword>
<keyword id="KW-0112">Calmodulin-binding</keyword>
<keyword id="KW-0963">Cytoplasm</keyword>
<keyword id="KW-0221">Differentiation</keyword>
<keyword id="KW-0238">DNA-binding</keyword>
<keyword id="KW-0539">Nucleus</keyword>
<keyword id="KW-0678">Repressor</keyword>
<keyword id="KW-0726">Sexual differentiation</keyword>
<keyword id="KW-0804">Transcription</keyword>
<keyword id="KW-0805">Transcription regulation</keyword>
<sequence>PMNAFMVWSCGERRKLAQQNPSMQNTEISKQLGYRWKSLTEAEKRPFFQEAQRLKTL</sequence>
<gene>
    <name type="primary">SRY</name>
    <name type="synonym">TDF</name>
</gene>
<dbReference type="EMBL" id="AF047165">
    <property type="protein sequence ID" value="AAC96073.1"/>
    <property type="molecule type" value="Genomic_DNA"/>
</dbReference>
<dbReference type="SMR" id="O55063"/>
<dbReference type="GO" id="GO:0005737">
    <property type="term" value="C:cytoplasm"/>
    <property type="evidence" value="ECO:0007669"/>
    <property type="project" value="UniProtKB-SubCell"/>
</dbReference>
<dbReference type="GO" id="GO:0016607">
    <property type="term" value="C:nuclear speck"/>
    <property type="evidence" value="ECO:0007669"/>
    <property type="project" value="UniProtKB-SubCell"/>
</dbReference>
<dbReference type="GO" id="GO:0005634">
    <property type="term" value="C:nucleus"/>
    <property type="evidence" value="ECO:0000250"/>
    <property type="project" value="UniProtKB"/>
</dbReference>
<dbReference type="GO" id="GO:0005516">
    <property type="term" value="F:calmodulin binding"/>
    <property type="evidence" value="ECO:0007669"/>
    <property type="project" value="UniProtKB-KW"/>
</dbReference>
<dbReference type="GO" id="GO:0001228">
    <property type="term" value="F:DNA-binding transcription activator activity, RNA polymerase II-specific"/>
    <property type="evidence" value="ECO:0007669"/>
    <property type="project" value="TreeGrafter"/>
</dbReference>
<dbReference type="GO" id="GO:0000978">
    <property type="term" value="F:RNA polymerase II cis-regulatory region sequence-specific DNA binding"/>
    <property type="evidence" value="ECO:0007669"/>
    <property type="project" value="TreeGrafter"/>
</dbReference>
<dbReference type="GO" id="GO:0030154">
    <property type="term" value="P:cell differentiation"/>
    <property type="evidence" value="ECO:0007669"/>
    <property type="project" value="UniProtKB-KW"/>
</dbReference>
<dbReference type="GO" id="GO:0007548">
    <property type="term" value="P:sex differentiation"/>
    <property type="evidence" value="ECO:0007669"/>
    <property type="project" value="UniProtKB-KW"/>
</dbReference>
<dbReference type="FunFam" id="1.10.30.10:FF:000100">
    <property type="entry name" value="Sex-determining region Y protein"/>
    <property type="match status" value="1"/>
</dbReference>
<dbReference type="Gene3D" id="1.10.30.10">
    <property type="entry name" value="High mobility group box domain"/>
    <property type="match status" value="1"/>
</dbReference>
<dbReference type="InterPro" id="IPR009071">
    <property type="entry name" value="HMG_box_dom"/>
</dbReference>
<dbReference type="InterPro" id="IPR036910">
    <property type="entry name" value="HMG_box_dom_sf"/>
</dbReference>
<dbReference type="InterPro" id="IPR050140">
    <property type="entry name" value="SRY-related_HMG-box_TF-like"/>
</dbReference>
<dbReference type="PANTHER" id="PTHR10270:SF161">
    <property type="entry name" value="SEX-DETERMINING REGION Y PROTEIN"/>
    <property type="match status" value="1"/>
</dbReference>
<dbReference type="PANTHER" id="PTHR10270">
    <property type="entry name" value="SOX TRANSCRIPTION FACTOR"/>
    <property type="match status" value="1"/>
</dbReference>
<dbReference type="Pfam" id="PF00505">
    <property type="entry name" value="HMG_box"/>
    <property type="match status" value="1"/>
</dbReference>
<dbReference type="SMART" id="SM00398">
    <property type="entry name" value="HMG"/>
    <property type="match status" value="1"/>
</dbReference>
<dbReference type="SUPFAM" id="SSF47095">
    <property type="entry name" value="HMG-box"/>
    <property type="match status" value="1"/>
</dbReference>
<dbReference type="PROSITE" id="PS50118">
    <property type="entry name" value="HMG_BOX_2"/>
    <property type="match status" value="1"/>
</dbReference>
<protein>
    <recommendedName>
        <fullName>Sex-determining region Y protein</fullName>
    </recommendedName>
    <alternativeName>
        <fullName>Testis-determining factor</fullName>
    </alternativeName>
</protein>
<name>SRY_APOAG</name>
<organism>
    <name type="scientific">Apodemus agrarius</name>
    <name type="common">Eurasian field mouse</name>
    <dbReference type="NCBI Taxonomy" id="39030"/>
    <lineage>
        <taxon>Eukaryota</taxon>
        <taxon>Metazoa</taxon>
        <taxon>Chordata</taxon>
        <taxon>Craniata</taxon>
        <taxon>Vertebrata</taxon>
        <taxon>Euteleostomi</taxon>
        <taxon>Mammalia</taxon>
        <taxon>Eutheria</taxon>
        <taxon>Euarchontoglires</taxon>
        <taxon>Glires</taxon>
        <taxon>Rodentia</taxon>
        <taxon>Myomorpha</taxon>
        <taxon>Muroidea</taxon>
        <taxon>Muridae</taxon>
        <taxon>Murinae</taxon>
        <taxon>Apodemus</taxon>
    </lineage>
</organism>
<feature type="chain" id="PRO_0000048632" description="Sex-determining region Y protein">
    <location>
        <begin position="1" status="less than"/>
        <end position="57" status="greater than"/>
    </location>
</feature>
<feature type="DNA-binding region" description="HMG box" evidence="3">
    <location>
        <begin position="1" status="less than"/>
        <end position="57" status="greater than"/>
    </location>
</feature>
<feature type="non-terminal residue">
    <location>
        <position position="1"/>
    </location>
</feature>
<feature type="non-terminal residue">
    <location>
        <position position="57"/>
    </location>
</feature>
<accession>O55063</accession>
<proteinExistence type="inferred from homology"/>
<comment type="function">
    <text evidence="1 2">Transcriptional regulator that controls a genetic switch in male development. It is necessary and sufficient for initiating male sex determination by directing the development of supporting cell precursors (pre-Sertoli cells) as Sertoli rather than granulosa cells. Involved in different aspects of gene regulation including promoter activation or repression. Binds to the DNA consensus sequence 5'-[AT]AACAA[AT]-3'. SRY HMG box recognizes DNA by partial intercalation in the minor groove and promotes DNA bending. Also involved in pre-mRNA splicing (By similarity). In male adult brain involved in the maintenance of motor functions of dopaminergic neurons (By similarity).</text>
</comment>
<comment type="subunit">
    <text evidence="2">Interacts with CALM, EP300, HDAC3, KPNB1, ZNF208 isoform KRAB-O, PARP1, SLC9A3R2 and WT1. The interaction with EP300 modulates its DNA-binding activity. The interaction with KPNB1 is sensitive to dissociation by Ran in the GTP-bound form. Interaction with PARP1 impaired its DNA-binding activity.</text>
</comment>
<comment type="subcellular location">
    <subcellularLocation>
        <location evidence="2">Nucleus speckle</location>
    </subcellularLocation>
    <subcellularLocation>
        <location evidence="2">Cytoplasm</location>
    </subcellularLocation>
    <subcellularLocation>
        <location evidence="2">Nucleus</location>
    </subcellularLocation>
</comment>
<comment type="similarity">
    <text evidence="4">Belongs to the SRY family.</text>
</comment>
<comment type="online information" name="Protein Spotlight">
    <link uri="https://www.proteinspotlight.org/back_issues/080"/>
    <text>The tenuous nature of sex - Issue 80 of March 2007</text>
</comment>
<evidence type="ECO:0000250" key="1">
    <source>
        <dbReference type="UniProtKB" id="P36394"/>
    </source>
</evidence>
<evidence type="ECO:0000250" key="2">
    <source>
        <dbReference type="UniProtKB" id="Q05066"/>
    </source>
</evidence>
<evidence type="ECO:0000255" key="3">
    <source>
        <dbReference type="PROSITE-ProRule" id="PRU00267"/>
    </source>
</evidence>
<evidence type="ECO:0000305" key="4"/>